<organism>
    <name type="scientific">Shigella flexneri</name>
    <dbReference type="NCBI Taxonomy" id="623"/>
    <lineage>
        <taxon>Bacteria</taxon>
        <taxon>Pseudomonadati</taxon>
        <taxon>Pseudomonadota</taxon>
        <taxon>Gammaproteobacteria</taxon>
        <taxon>Enterobacterales</taxon>
        <taxon>Enterobacteriaceae</taxon>
        <taxon>Shigella</taxon>
    </lineage>
</organism>
<accession>Q83SE5</accession>
<evidence type="ECO:0000255" key="1">
    <source>
        <dbReference type="HAMAP-Rule" id="MF_00323"/>
    </source>
</evidence>
<protein>
    <recommendedName>
        <fullName evidence="1">Ferrochelatase</fullName>
        <ecNumber evidence="1">4.98.1.1</ecNumber>
    </recommendedName>
    <alternativeName>
        <fullName evidence="1">Heme synthase</fullName>
    </alternativeName>
    <alternativeName>
        <fullName evidence="1">Protoheme ferro-lyase</fullName>
    </alternativeName>
</protein>
<gene>
    <name evidence="1" type="primary">hemH</name>
    <name type="ordered locus">SF0420</name>
    <name type="ordered locus">S0427</name>
</gene>
<sequence length="320" mass="35942">MRQTKTGILLANLGTPDAPTPEAVKRYLKQFLSDRRVVDTSRLLWWPLLRGVILPLRSPRVAKLYASVWMEDGSPLMVYSRQQQQALAQRLPDTPVALGMSYGSPSLESSVDELLAEHVDHIVVLPLYPQFSCSTVGAVWDELARILARKRSIPGISFIRDYADNHDYINALANSVRASFAKHGEPDLLLLSYHGIPQRYADEGDDYPQRCRTTTRELASALGMVPEKVMMTFQSRFGREPWLMPYTDETLKMLGEKGVGHIQVMCPGFAADCLETLEEIAEQNREVFLGAGGKKYEYIPALNATPEHIEMMANLVAAYR</sequence>
<feature type="chain" id="PRO_0000175200" description="Ferrochelatase">
    <location>
        <begin position="1"/>
        <end position="320"/>
    </location>
</feature>
<feature type="binding site" evidence="1">
    <location>
        <position position="194"/>
    </location>
    <ligand>
        <name>Fe cation</name>
        <dbReference type="ChEBI" id="CHEBI:24875"/>
    </ligand>
</feature>
<feature type="binding site" evidence="1">
    <location>
        <position position="275"/>
    </location>
    <ligand>
        <name>Fe cation</name>
        <dbReference type="ChEBI" id="CHEBI:24875"/>
    </ligand>
</feature>
<dbReference type="EC" id="4.98.1.1" evidence="1"/>
<dbReference type="EMBL" id="AE005674">
    <property type="protein sequence ID" value="AAN42075.1"/>
    <property type="molecule type" value="Genomic_DNA"/>
</dbReference>
<dbReference type="EMBL" id="AE014073">
    <property type="protein sequence ID" value="AAP15952.1"/>
    <property type="molecule type" value="Genomic_DNA"/>
</dbReference>
<dbReference type="RefSeq" id="NP_706368.1">
    <property type="nucleotide sequence ID" value="NC_004337.2"/>
</dbReference>
<dbReference type="RefSeq" id="WP_001250094.1">
    <property type="nucleotide sequence ID" value="NZ_WPGW01000015.1"/>
</dbReference>
<dbReference type="SMR" id="Q83SE5"/>
<dbReference type="STRING" id="198214.SF0420"/>
<dbReference type="PaxDb" id="198214-SF0420"/>
<dbReference type="GeneID" id="1027726"/>
<dbReference type="KEGG" id="sfl:SF0420"/>
<dbReference type="KEGG" id="sfx:S0427"/>
<dbReference type="PATRIC" id="fig|198214.7.peg.482"/>
<dbReference type="HOGENOM" id="CLU_018884_0_0_6"/>
<dbReference type="UniPathway" id="UPA00252">
    <property type="reaction ID" value="UER00325"/>
</dbReference>
<dbReference type="Proteomes" id="UP000001006">
    <property type="component" value="Chromosome"/>
</dbReference>
<dbReference type="Proteomes" id="UP000002673">
    <property type="component" value="Chromosome"/>
</dbReference>
<dbReference type="GO" id="GO:0005737">
    <property type="term" value="C:cytoplasm"/>
    <property type="evidence" value="ECO:0007669"/>
    <property type="project" value="UniProtKB-SubCell"/>
</dbReference>
<dbReference type="GO" id="GO:0004325">
    <property type="term" value="F:ferrochelatase activity"/>
    <property type="evidence" value="ECO:0007669"/>
    <property type="project" value="UniProtKB-UniRule"/>
</dbReference>
<dbReference type="GO" id="GO:0046872">
    <property type="term" value="F:metal ion binding"/>
    <property type="evidence" value="ECO:0007669"/>
    <property type="project" value="UniProtKB-KW"/>
</dbReference>
<dbReference type="GO" id="GO:0006783">
    <property type="term" value="P:heme biosynthetic process"/>
    <property type="evidence" value="ECO:0007669"/>
    <property type="project" value="UniProtKB-UniRule"/>
</dbReference>
<dbReference type="CDD" id="cd00419">
    <property type="entry name" value="Ferrochelatase_C"/>
    <property type="match status" value="1"/>
</dbReference>
<dbReference type="CDD" id="cd03411">
    <property type="entry name" value="Ferrochelatase_N"/>
    <property type="match status" value="1"/>
</dbReference>
<dbReference type="FunFam" id="3.40.50.1400:FF:000004">
    <property type="entry name" value="Ferrochelatase"/>
    <property type="match status" value="1"/>
</dbReference>
<dbReference type="Gene3D" id="3.40.50.1400">
    <property type="match status" value="2"/>
</dbReference>
<dbReference type="HAMAP" id="MF_00323">
    <property type="entry name" value="Ferrochelatase"/>
    <property type="match status" value="1"/>
</dbReference>
<dbReference type="InterPro" id="IPR001015">
    <property type="entry name" value="Ferrochelatase"/>
</dbReference>
<dbReference type="InterPro" id="IPR019772">
    <property type="entry name" value="Ferrochelatase_AS"/>
</dbReference>
<dbReference type="InterPro" id="IPR033644">
    <property type="entry name" value="Ferrochelatase_C"/>
</dbReference>
<dbReference type="InterPro" id="IPR033659">
    <property type="entry name" value="Ferrochelatase_N"/>
</dbReference>
<dbReference type="NCBIfam" id="TIGR00109">
    <property type="entry name" value="hemH"/>
    <property type="match status" value="1"/>
</dbReference>
<dbReference type="PANTHER" id="PTHR11108">
    <property type="entry name" value="FERROCHELATASE"/>
    <property type="match status" value="1"/>
</dbReference>
<dbReference type="PANTHER" id="PTHR11108:SF1">
    <property type="entry name" value="FERROCHELATASE, MITOCHONDRIAL"/>
    <property type="match status" value="1"/>
</dbReference>
<dbReference type="Pfam" id="PF00762">
    <property type="entry name" value="Ferrochelatase"/>
    <property type="match status" value="1"/>
</dbReference>
<dbReference type="SUPFAM" id="SSF53800">
    <property type="entry name" value="Chelatase"/>
    <property type="match status" value="1"/>
</dbReference>
<dbReference type="PROSITE" id="PS00534">
    <property type="entry name" value="FERROCHELATASE"/>
    <property type="match status" value="1"/>
</dbReference>
<comment type="function">
    <text evidence="1">Catalyzes the ferrous insertion into protoporphyrin IX.</text>
</comment>
<comment type="catalytic activity">
    <reaction evidence="1">
        <text>heme b + 2 H(+) = protoporphyrin IX + Fe(2+)</text>
        <dbReference type="Rhea" id="RHEA:22584"/>
        <dbReference type="ChEBI" id="CHEBI:15378"/>
        <dbReference type="ChEBI" id="CHEBI:29033"/>
        <dbReference type="ChEBI" id="CHEBI:57306"/>
        <dbReference type="ChEBI" id="CHEBI:60344"/>
        <dbReference type="EC" id="4.98.1.1"/>
    </reaction>
</comment>
<comment type="pathway">
    <text evidence="1">Porphyrin-containing compound metabolism; protoheme biosynthesis; protoheme from protoporphyrin-IX: step 1/1.</text>
</comment>
<comment type="subunit">
    <text evidence="1">Monomer.</text>
</comment>
<comment type="subcellular location">
    <subcellularLocation>
        <location evidence="1">Cytoplasm</location>
    </subcellularLocation>
</comment>
<comment type="similarity">
    <text evidence="1">Belongs to the ferrochelatase family.</text>
</comment>
<name>HEMH_SHIFL</name>
<reference key="1">
    <citation type="journal article" date="2002" name="Nucleic Acids Res.">
        <title>Genome sequence of Shigella flexneri 2a: insights into pathogenicity through comparison with genomes of Escherichia coli K12 and O157.</title>
        <authorList>
            <person name="Jin Q."/>
            <person name="Yuan Z."/>
            <person name="Xu J."/>
            <person name="Wang Y."/>
            <person name="Shen Y."/>
            <person name="Lu W."/>
            <person name="Wang J."/>
            <person name="Liu H."/>
            <person name="Yang J."/>
            <person name="Yang F."/>
            <person name="Zhang X."/>
            <person name="Zhang J."/>
            <person name="Yang G."/>
            <person name="Wu H."/>
            <person name="Qu D."/>
            <person name="Dong J."/>
            <person name="Sun L."/>
            <person name="Xue Y."/>
            <person name="Zhao A."/>
            <person name="Gao Y."/>
            <person name="Zhu J."/>
            <person name="Kan B."/>
            <person name="Ding K."/>
            <person name="Chen S."/>
            <person name="Cheng H."/>
            <person name="Yao Z."/>
            <person name="He B."/>
            <person name="Chen R."/>
            <person name="Ma D."/>
            <person name="Qiang B."/>
            <person name="Wen Y."/>
            <person name="Hou Y."/>
            <person name="Yu J."/>
        </authorList>
    </citation>
    <scope>NUCLEOTIDE SEQUENCE [LARGE SCALE GENOMIC DNA]</scope>
    <source>
        <strain>301 / Serotype 2a</strain>
    </source>
</reference>
<reference key="2">
    <citation type="journal article" date="2003" name="Infect. Immun.">
        <title>Complete genome sequence and comparative genomics of Shigella flexneri serotype 2a strain 2457T.</title>
        <authorList>
            <person name="Wei J."/>
            <person name="Goldberg M.B."/>
            <person name="Burland V."/>
            <person name="Venkatesan M.M."/>
            <person name="Deng W."/>
            <person name="Fournier G."/>
            <person name="Mayhew G.F."/>
            <person name="Plunkett G. III"/>
            <person name="Rose D.J."/>
            <person name="Darling A."/>
            <person name="Mau B."/>
            <person name="Perna N.T."/>
            <person name="Payne S.M."/>
            <person name="Runyen-Janecky L.J."/>
            <person name="Zhou S."/>
            <person name="Schwartz D.C."/>
            <person name="Blattner F.R."/>
        </authorList>
    </citation>
    <scope>NUCLEOTIDE SEQUENCE [LARGE SCALE GENOMIC DNA]</scope>
    <source>
        <strain>ATCC 700930 / 2457T / Serotype 2a</strain>
    </source>
</reference>
<keyword id="KW-0963">Cytoplasm</keyword>
<keyword id="KW-0350">Heme biosynthesis</keyword>
<keyword id="KW-0408">Iron</keyword>
<keyword id="KW-0456">Lyase</keyword>
<keyword id="KW-0479">Metal-binding</keyword>
<keyword id="KW-0627">Porphyrin biosynthesis</keyword>
<keyword id="KW-1185">Reference proteome</keyword>
<proteinExistence type="inferred from homology"/>